<sequence>MTRLLGGRIEVICGCMFSGKTEELIRRLNHVRLARQRLIAFTPRRDTRYRLGSLVSHNGLSVEARVIDSIRDIPAYLDSDVDVVAVDELHLLDDPPDAAREVCQQLADRGLRVIVAGLDQDFRAQPFPAMAQLMAVAEQVDKLYAICVRCGAYATRSQRLIDGKPAPADAPTIVVGGQELYEARCRACYEPAQ</sequence>
<name>KITH_ROSS1</name>
<proteinExistence type="inferred from homology"/>
<dbReference type="EC" id="2.7.1.21" evidence="1"/>
<dbReference type="EMBL" id="CP000686">
    <property type="protein sequence ID" value="ABQ92158.1"/>
    <property type="molecule type" value="Genomic_DNA"/>
</dbReference>
<dbReference type="RefSeq" id="WP_011958499.1">
    <property type="nucleotide sequence ID" value="NC_009523.1"/>
</dbReference>
<dbReference type="SMR" id="A5UZV5"/>
<dbReference type="STRING" id="357808.RoseRS_3804"/>
<dbReference type="KEGG" id="rrs:RoseRS_3804"/>
<dbReference type="eggNOG" id="COG1435">
    <property type="taxonomic scope" value="Bacteria"/>
</dbReference>
<dbReference type="HOGENOM" id="CLU_064400_3_0_0"/>
<dbReference type="OrthoDB" id="9781579at2"/>
<dbReference type="Proteomes" id="UP000006554">
    <property type="component" value="Chromosome"/>
</dbReference>
<dbReference type="GO" id="GO:0005829">
    <property type="term" value="C:cytosol"/>
    <property type="evidence" value="ECO:0007669"/>
    <property type="project" value="TreeGrafter"/>
</dbReference>
<dbReference type="GO" id="GO:0005524">
    <property type="term" value="F:ATP binding"/>
    <property type="evidence" value="ECO:0007669"/>
    <property type="project" value="UniProtKB-UniRule"/>
</dbReference>
<dbReference type="GO" id="GO:0004797">
    <property type="term" value="F:thymidine kinase activity"/>
    <property type="evidence" value="ECO:0007669"/>
    <property type="project" value="UniProtKB-UniRule"/>
</dbReference>
<dbReference type="GO" id="GO:0008270">
    <property type="term" value="F:zinc ion binding"/>
    <property type="evidence" value="ECO:0007669"/>
    <property type="project" value="UniProtKB-UniRule"/>
</dbReference>
<dbReference type="GO" id="GO:0071897">
    <property type="term" value="P:DNA biosynthetic process"/>
    <property type="evidence" value="ECO:0007669"/>
    <property type="project" value="UniProtKB-KW"/>
</dbReference>
<dbReference type="GO" id="GO:0046104">
    <property type="term" value="P:thymidine metabolic process"/>
    <property type="evidence" value="ECO:0007669"/>
    <property type="project" value="TreeGrafter"/>
</dbReference>
<dbReference type="Gene3D" id="3.30.60.20">
    <property type="match status" value="1"/>
</dbReference>
<dbReference type="Gene3D" id="3.40.50.300">
    <property type="entry name" value="P-loop containing nucleotide triphosphate hydrolases"/>
    <property type="match status" value="1"/>
</dbReference>
<dbReference type="HAMAP" id="MF_00124">
    <property type="entry name" value="Thymidine_kinase"/>
    <property type="match status" value="1"/>
</dbReference>
<dbReference type="InterPro" id="IPR027417">
    <property type="entry name" value="P-loop_NTPase"/>
</dbReference>
<dbReference type="InterPro" id="IPR001267">
    <property type="entry name" value="Thymidine_kinase"/>
</dbReference>
<dbReference type="InterPro" id="IPR020633">
    <property type="entry name" value="Thymidine_kinase_CS"/>
</dbReference>
<dbReference type="NCBIfam" id="NF003296">
    <property type="entry name" value="PRK04296.1-1"/>
    <property type="match status" value="1"/>
</dbReference>
<dbReference type="PANTHER" id="PTHR11441">
    <property type="entry name" value="THYMIDINE KINASE"/>
    <property type="match status" value="1"/>
</dbReference>
<dbReference type="PANTHER" id="PTHR11441:SF0">
    <property type="entry name" value="THYMIDINE KINASE, CYTOSOLIC"/>
    <property type="match status" value="1"/>
</dbReference>
<dbReference type="Pfam" id="PF00265">
    <property type="entry name" value="TK"/>
    <property type="match status" value="1"/>
</dbReference>
<dbReference type="PIRSF" id="PIRSF035805">
    <property type="entry name" value="TK_cell"/>
    <property type="match status" value="1"/>
</dbReference>
<dbReference type="SUPFAM" id="SSF57716">
    <property type="entry name" value="Glucocorticoid receptor-like (DNA-binding domain)"/>
    <property type="match status" value="1"/>
</dbReference>
<dbReference type="SUPFAM" id="SSF52540">
    <property type="entry name" value="P-loop containing nucleoside triphosphate hydrolases"/>
    <property type="match status" value="1"/>
</dbReference>
<dbReference type="PROSITE" id="PS00603">
    <property type="entry name" value="TK_CELLULAR_TYPE"/>
    <property type="match status" value="1"/>
</dbReference>
<gene>
    <name evidence="1" type="primary">tdk</name>
    <name type="ordered locus">RoseRS_3804</name>
</gene>
<comment type="catalytic activity">
    <reaction evidence="1">
        <text>thymidine + ATP = dTMP + ADP + H(+)</text>
        <dbReference type="Rhea" id="RHEA:19129"/>
        <dbReference type="ChEBI" id="CHEBI:15378"/>
        <dbReference type="ChEBI" id="CHEBI:17748"/>
        <dbReference type="ChEBI" id="CHEBI:30616"/>
        <dbReference type="ChEBI" id="CHEBI:63528"/>
        <dbReference type="ChEBI" id="CHEBI:456216"/>
        <dbReference type="EC" id="2.7.1.21"/>
    </reaction>
</comment>
<comment type="subunit">
    <text evidence="1">Homotetramer.</text>
</comment>
<comment type="subcellular location">
    <subcellularLocation>
        <location evidence="1">Cytoplasm</location>
    </subcellularLocation>
</comment>
<comment type="similarity">
    <text evidence="1">Belongs to the thymidine kinase family.</text>
</comment>
<organism>
    <name type="scientific">Roseiflexus sp. (strain RS-1)</name>
    <dbReference type="NCBI Taxonomy" id="357808"/>
    <lineage>
        <taxon>Bacteria</taxon>
        <taxon>Bacillati</taxon>
        <taxon>Chloroflexota</taxon>
        <taxon>Chloroflexia</taxon>
        <taxon>Chloroflexales</taxon>
        <taxon>Roseiflexineae</taxon>
        <taxon>Roseiflexaceae</taxon>
        <taxon>Roseiflexus</taxon>
    </lineage>
</organism>
<keyword id="KW-0067">ATP-binding</keyword>
<keyword id="KW-0963">Cytoplasm</keyword>
<keyword id="KW-0237">DNA synthesis</keyword>
<keyword id="KW-0418">Kinase</keyword>
<keyword id="KW-0479">Metal-binding</keyword>
<keyword id="KW-0547">Nucleotide-binding</keyword>
<keyword id="KW-0808">Transferase</keyword>
<keyword id="KW-0862">Zinc</keyword>
<protein>
    <recommendedName>
        <fullName evidence="1">Thymidine kinase</fullName>
        <ecNumber evidence="1">2.7.1.21</ecNumber>
    </recommendedName>
</protein>
<reference key="1">
    <citation type="submission" date="2007-04" db="EMBL/GenBank/DDBJ databases">
        <title>Complete sequence of Roseiflexus sp. RS-1.</title>
        <authorList>
            <consortium name="US DOE Joint Genome Institute"/>
            <person name="Copeland A."/>
            <person name="Lucas S."/>
            <person name="Lapidus A."/>
            <person name="Barry K."/>
            <person name="Detter J.C."/>
            <person name="Glavina del Rio T."/>
            <person name="Hammon N."/>
            <person name="Israni S."/>
            <person name="Dalin E."/>
            <person name="Tice H."/>
            <person name="Pitluck S."/>
            <person name="Chertkov O."/>
            <person name="Brettin T."/>
            <person name="Bruce D."/>
            <person name="Han C."/>
            <person name="Schmutz J."/>
            <person name="Larimer F."/>
            <person name="Land M."/>
            <person name="Hauser L."/>
            <person name="Kyrpides N."/>
            <person name="Mikhailova N."/>
            <person name="Bryant D.A."/>
            <person name="Richardson P."/>
        </authorList>
    </citation>
    <scope>NUCLEOTIDE SEQUENCE [LARGE SCALE GENOMIC DNA]</scope>
    <source>
        <strain>RS-1</strain>
    </source>
</reference>
<accession>A5UZV5</accession>
<feature type="chain" id="PRO_1000076240" description="Thymidine kinase">
    <location>
        <begin position="1"/>
        <end position="193"/>
    </location>
</feature>
<feature type="active site" description="Proton acceptor" evidence="1">
    <location>
        <position position="88"/>
    </location>
</feature>
<feature type="binding site" evidence="1">
    <location>
        <begin position="14"/>
        <end position="21"/>
    </location>
    <ligand>
        <name>ATP</name>
        <dbReference type="ChEBI" id="CHEBI:30616"/>
    </ligand>
</feature>
<feature type="binding site" evidence="1">
    <location>
        <begin position="87"/>
        <end position="90"/>
    </location>
    <ligand>
        <name>ATP</name>
        <dbReference type="ChEBI" id="CHEBI:30616"/>
    </ligand>
</feature>
<feature type="binding site" evidence="1">
    <location>
        <position position="147"/>
    </location>
    <ligand>
        <name>Zn(2+)</name>
        <dbReference type="ChEBI" id="CHEBI:29105"/>
    </ligand>
</feature>
<feature type="binding site" evidence="1">
    <location>
        <position position="150"/>
    </location>
    <ligand>
        <name>Zn(2+)</name>
        <dbReference type="ChEBI" id="CHEBI:29105"/>
    </ligand>
</feature>
<feature type="binding site" evidence="1">
    <location>
        <position position="185"/>
    </location>
    <ligand>
        <name>Zn(2+)</name>
        <dbReference type="ChEBI" id="CHEBI:29105"/>
    </ligand>
</feature>
<feature type="binding site" evidence="1">
    <location>
        <position position="188"/>
    </location>
    <ligand>
        <name>Zn(2+)</name>
        <dbReference type="ChEBI" id="CHEBI:29105"/>
    </ligand>
</feature>
<evidence type="ECO:0000255" key="1">
    <source>
        <dbReference type="HAMAP-Rule" id="MF_00124"/>
    </source>
</evidence>